<dbReference type="EMBL" id="CR378663">
    <property type="protein sequence ID" value="CAG18766.1"/>
    <property type="molecule type" value="Genomic_DNA"/>
</dbReference>
<dbReference type="RefSeq" id="WP_011217133.1">
    <property type="nucleotide sequence ID" value="NC_006370.1"/>
</dbReference>
<dbReference type="SMR" id="Q6LVA9"/>
<dbReference type="STRING" id="298386.PBPRA0327"/>
<dbReference type="KEGG" id="ppr:PBPRA0327"/>
<dbReference type="eggNOG" id="COG0197">
    <property type="taxonomic scope" value="Bacteria"/>
</dbReference>
<dbReference type="HOGENOM" id="CLU_078858_2_1_6"/>
<dbReference type="Proteomes" id="UP000000593">
    <property type="component" value="Chromosome 1"/>
</dbReference>
<dbReference type="GO" id="GO:0022625">
    <property type="term" value="C:cytosolic large ribosomal subunit"/>
    <property type="evidence" value="ECO:0007669"/>
    <property type="project" value="TreeGrafter"/>
</dbReference>
<dbReference type="GO" id="GO:0019843">
    <property type="term" value="F:rRNA binding"/>
    <property type="evidence" value="ECO:0007669"/>
    <property type="project" value="UniProtKB-UniRule"/>
</dbReference>
<dbReference type="GO" id="GO:0003735">
    <property type="term" value="F:structural constituent of ribosome"/>
    <property type="evidence" value="ECO:0007669"/>
    <property type="project" value="InterPro"/>
</dbReference>
<dbReference type="GO" id="GO:0000049">
    <property type="term" value="F:tRNA binding"/>
    <property type="evidence" value="ECO:0007669"/>
    <property type="project" value="UniProtKB-KW"/>
</dbReference>
<dbReference type="GO" id="GO:0006412">
    <property type="term" value="P:translation"/>
    <property type="evidence" value="ECO:0007669"/>
    <property type="project" value="UniProtKB-UniRule"/>
</dbReference>
<dbReference type="CDD" id="cd01433">
    <property type="entry name" value="Ribosomal_L16_L10e"/>
    <property type="match status" value="1"/>
</dbReference>
<dbReference type="FunFam" id="3.90.1170.10:FF:000001">
    <property type="entry name" value="50S ribosomal protein L16"/>
    <property type="match status" value="1"/>
</dbReference>
<dbReference type="Gene3D" id="3.90.1170.10">
    <property type="entry name" value="Ribosomal protein L10e/L16"/>
    <property type="match status" value="1"/>
</dbReference>
<dbReference type="HAMAP" id="MF_01342">
    <property type="entry name" value="Ribosomal_uL16"/>
    <property type="match status" value="1"/>
</dbReference>
<dbReference type="InterPro" id="IPR047873">
    <property type="entry name" value="Ribosomal_uL16"/>
</dbReference>
<dbReference type="InterPro" id="IPR000114">
    <property type="entry name" value="Ribosomal_uL16_bact-type"/>
</dbReference>
<dbReference type="InterPro" id="IPR020798">
    <property type="entry name" value="Ribosomal_uL16_CS"/>
</dbReference>
<dbReference type="InterPro" id="IPR016180">
    <property type="entry name" value="Ribosomal_uL16_dom"/>
</dbReference>
<dbReference type="InterPro" id="IPR036920">
    <property type="entry name" value="Ribosomal_uL16_sf"/>
</dbReference>
<dbReference type="NCBIfam" id="TIGR01164">
    <property type="entry name" value="rplP_bact"/>
    <property type="match status" value="1"/>
</dbReference>
<dbReference type="PANTHER" id="PTHR12220">
    <property type="entry name" value="50S/60S RIBOSOMAL PROTEIN L16"/>
    <property type="match status" value="1"/>
</dbReference>
<dbReference type="PANTHER" id="PTHR12220:SF13">
    <property type="entry name" value="LARGE RIBOSOMAL SUBUNIT PROTEIN UL16M"/>
    <property type="match status" value="1"/>
</dbReference>
<dbReference type="Pfam" id="PF00252">
    <property type="entry name" value="Ribosomal_L16"/>
    <property type="match status" value="1"/>
</dbReference>
<dbReference type="PRINTS" id="PR00060">
    <property type="entry name" value="RIBOSOMALL16"/>
</dbReference>
<dbReference type="SUPFAM" id="SSF54686">
    <property type="entry name" value="Ribosomal protein L16p/L10e"/>
    <property type="match status" value="1"/>
</dbReference>
<dbReference type="PROSITE" id="PS00586">
    <property type="entry name" value="RIBOSOMAL_L16_1"/>
    <property type="match status" value="1"/>
</dbReference>
<reference key="1">
    <citation type="journal article" date="2005" name="Science">
        <title>Life at depth: Photobacterium profundum genome sequence and expression analysis.</title>
        <authorList>
            <person name="Vezzi A."/>
            <person name="Campanaro S."/>
            <person name="D'Angelo M."/>
            <person name="Simonato F."/>
            <person name="Vitulo N."/>
            <person name="Lauro F.M."/>
            <person name="Cestaro A."/>
            <person name="Malacrida G."/>
            <person name="Simionati B."/>
            <person name="Cannata N."/>
            <person name="Romualdi C."/>
            <person name="Bartlett D.H."/>
            <person name="Valle G."/>
        </authorList>
    </citation>
    <scope>NUCLEOTIDE SEQUENCE [LARGE SCALE GENOMIC DNA]</scope>
    <source>
        <strain>ATCC BAA-1253 / SS9</strain>
    </source>
</reference>
<gene>
    <name evidence="1" type="primary">rplP</name>
    <name type="ordered locus">PBPRA0327</name>
</gene>
<keyword id="KW-1185">Reference proteome</keyword>
<keyword id="KW-0687">Ribonucleoprotein</keyword>
<keyword id="KW-0689">Ribosomal protein</keyword>
<keyword id="KW-0694">RNA-binding</keyword>
<keyword id="KW-0699">rRNA-binding</keyword>
<keyword id="KW-0820">tRNA-binding</keyword>
<proteinExistence type="inferred from homology"/>
<feature type="chain" id="PRO_0000062164" description="Large ribosomal subunit protein uL16">
    <location>
        <begin position="1"/>
        <end position="136"/>
    </location>
</feature>
<name>RL16_PHOPR</name>
<protein>
    <recommendedName>
        <fullName evidence="1">Large ribosomal subunit protein uL16</fullName>
    </recommendedName>
    <alternativeName>
        <fullName evidence="2">50S ribosomal protein L16</fullName>
    </alternativeName>
</protein>
<comment type="function">
    <text evidence="1">Binds 23S rRNA and is also seen to make contacts with the A and possibly P site tRNAs.</text>
</comment>
<comment type="subunit">
    <text evidence="1">Part of the 50S ribosomal subunit.</text>
</comment>
<comment type="similarity">
    <text evidence="1">Belongs to the universal ribosomal protein uL16 family.</text>
</comment>
<accession>Q6LVA9</accession>
<organism>
    <name type="scientific">Photobacterium profundum (strain SS9)</name>
    <dbReference type="NCBI Taxonomy" id="298386"/>
    <lineage>
        <taxon>Bacteria</taxon>
        <taxon>Pseudomonadati</taxon>
        <taxon>Pseudomonadota</taxon>
        <taxon>Gammaproteobacteria</taxon>
        <taxon>Vibrionales</taxon>
        <taxon>Vibrionaceae</taxon>
        <taxon>Photobacterium</taxon>
    </lineage>
</organism>
<sequence>MLQPKRTKFRKTFKGRNRGLANGTDVSFGTFGLKAVGRGRLTARQIEAARRAMTRHVKRQGQIWIRVFPDKPITSKPLEVRQGKGKGNVEYWVAQIQPGKVLYEMDGVPEVLAREAFNLAARKLPIKTTFVIKAVM</sequence>
<evidence type="ECO:0000255" key="1">
    <source>
        <dbReference type="HAMAP-Rule" id="MF_01342"/>
    </source>
</evidence>
<evidence type="ECO:0000305" key="2"/>